<gene>
    <name type="primary">CA6</name>
</gene>
<comment type="function">
    <text evidence="1">Reversible hydration of carbon dioxide. Its role in saliva is unknown (By similarity).</text>
</comment>
<comment type="catalytic activity">
    <reaction>
        <text>hydrogencarbonate + H(+) = CO2 + H2O</text>
        <dbReference type="Rhea" id="RHEA:10748"/>
        <dbReference type="ChEBI" id="CHEBI:15377"/>
        <dbReference type="ChEBI" id="CHEBI:15378"/>
        <dbReference type="ChEBI" id="CHEBI:16526"/>
        <dbReference type="ChEBI" id="CHEBI:17544"/>
        <dbReference type="EC" id="4.2.1.1"/>
    </reaction>
</comment>
<comment type="cofactor">
    <cofactor evidence="4">
        <name>Zn(2+)</name>
        <dbReference type="ChEBI" id="CHEBI:29105"/>
    </cofactor>
</comment>
<comment type="subcellular location">
    <subcellularLocation>
        <location>Secreted</location>
    </subcellularLocation>
</comment>
<comment type="similarity">
    <text evidence="7">Belongs to the alpha-carbonic anhydrase family.</text>
</comment>
<keyword id="KW-1015">Disulfide bond</keyword>
<keyword id="KW-0325">Glycoprotein</keyword>
<keyword id="KW-0456">Lyase</keyword>
<keyword id="KW-0479">Metal-binding</keyword>
<keyword id="KW-1185">Reference proteome</keyword>
<keyword id="KW-0964">Secreted</keyword>
<keyword id="KW-0732">Signal</keyword>
<keyword id="KW-0862">Zinc</keyword>
<reference key="1">
    <citation type="submission" date="2002-03" db="EMBL/GenBank/DDBJ databases">
        <title>Canine carbonic anhydrase VI (CA6), mRNA.</title>
        <authorList>
            <person name="Murakami M."/>
        </authorList>
    </citation>
    <scope>NUCLEOTIDE SEQUENCE [MRNA]</scope>
    <source>
        <tissue>Parotid gland</tissue>
    </source>
</reference>
<name>CAH6_CANLF</name>
<organism>
    <name type="scientific">Canis lupus familiaris</name>
    <name type="common">Dog</name>
    <name type="synonym">Canis familiaris</name>
    <dbReference type="NCBI Taxonomy" id="9615"/>
    <lineage>
        <taxon>Eukaryota</taxon>
        <taxon>Metazoa</taxon>
        <taxon>Chordata</taxon>
        <taxon>Craniata</taxon>
        <taxon>Vertebrata</taxon>
        <taxon>Euteleostomi</taxon>
        <taxon>Mammalia</taxon>
        <taxon>Eutheria</taxon>
        <taxon>Laurasiatheria</taxon>
        <taxon>Carnivora</taxon>
        <taxon>Caniformia</taxon>
        <taxon>Canidae</taxon>
        <taxon>Canis</taxon>
    </lineage>
</organism>
<dbReference type="EC" id="4.2.1.1"/>
<dbReference type="EMBL" id="AB080972">
    <property type="protein sequence ID" value="BAC65098.1"/>
    <property type="molecule type" value="mRNA"/>
</dbReference>
<dbReference type="RefSeq" id="NP_001002999.1">
    <property type="nucleotide sequence ID" value="NM_001002999.1"/>
</dbReference>
<dbReference type="SMR" id="Q865C0"/>
<dbReference type="FunCoup" id="Q865C0">
    <property type="interactions" value="20"/>
</dbReference>
<dbReference type="STRING" id="9615.ENSCAFP00000029168"/>
<dbReference type="GlyCosmos" id="Q865C0">
    <property type="glycosylation" value="1 site, No reported glycans"/>
</dbReference>
<dbReference type="PaxDb" id="9612-ENSCAFP00000029168"/>
<dbReference type="GeneID" id="403503"/>
<dbReference type="KEGG" id="cfa:403503"/>
<dbReference type="CTD" id="765"/>
<dbReference type="eggNOG" id="KOG0382">
    <property type="taxonomic scope" value="Eukaryota"/>
</dbReference>
<dbReference type="InParanoid" id="Q865C0"/>
<dbReference type="OrthoDB" id="429145at2759"/>
<dbReference type="Proteomes" id="UP000002254">
    <property type="component" value="Unplaced"/>
</dbReference>
<dbReference type="Proteomes" id="UP000694429">
    <property type="component" value="Unplaced"/>
</dbReference>
<dbReference type="Proteomes" id="UP000694542">
    <property type="component" value="Unplaced"/>
</dbReference>
<dbReference type="Proteomes" id="UP000805418">
    <property type="component" value="Unplaced"/>
</dbReference>
<dbReference type="GO" id="GO:0005615">
    <property type="term" value="C:extracellular space"/>
    <property type="evidence" value="ECO:0000318"/>
    <property type="project" value="GO_Central"/>
</dbReference>
<dbReference type="GO" id="GO:0004089">
    <property type="term" value="F:carbonate dehydratase activity"/>
    <property type="evidence" value="ECO:0000318"/>
    <property type="project" value="GO_Central"/>
</dbReference>
<dbReference type="GO" id="GO:0008270">
    <property type="term" value="F:zinc ion binding"/>
    <property type="evidence" value="ECO:0007669"/>
    <property type="project" value="InterPro"/>
</dbReference>
<dbReference type="FunFam" id="3.10.200.10:FF:000003">
    <property type="entry name" value="Carbonic anhydrase 12"/>
    <property type="match status" value="1"/>
</dbReference>
<dbReference type="Gene3D" id="3.10.200.10">
    <property type="entry name" value="Alpha carbonic anhydrase"/>
    <property type="match status" value="1"/>
</dbReference>
<dbReference type="InterPro" id="IPR001148">
    <property type="entry name" value="CA_dom"/>
</dbReference>
<dbReference type="InterPro" id="IPR036398">
    <property type="entry name" value="CA_dom_sf"/>
</dbReference>
<dbReference type="InterPro" id="IPR023561">
    <property type="entry name" value="Carbonic_anhydrase_a-class"/>
</dbReference>
<dbReference type="InterPro" id="IPR018338">
    <property type="entry name" value="Carbonic_anhydrase_a-class_CS"/>
</dbReference>
<dbReference type="PANTHER" id="PTHR18952">
    <property type="entry name" value="CARBONIC ANHYDRASE"/>
    <property type="match status" value="1"/>
</dbReference>
<dbReference type="PANTHER" id="PTHR18952:SF110">
    <property type="entry name" value="CARBONIC ANHYDRASE 6"/>
    <property type="match status" value="1"/>
</dbReference>
<dbReference type="Pfam" id="PF00194">
    <property type="entry name" value="Carb_anhydrase"/>
    <property type="match status" value="1"/>
</dbReference>
<dbReference type="SMART" id="SM01057">
    <property type="entry name" value="Carb_anhydrase"/>
    <property type="match status" value="1"/>
</dbReference>
<dbReference type="SUPFAM" id="SSF51069">
    <property type="entry name" value="Carbonic anhydrase"/>
    <property type="match status" value="1"/>
</dbReference>
<dbReference type="PROSITE" id="PS00162">
    <property type="entry name" value="ALPHA_CA_1"/>
    <property type="match status" value="1"/>
</dbReference>
<dbReference type="PROSITE" id="PS51144">
    <property type="entry name" value="ALPHA_CA_2"/>
    <property type="match status" value="1"/>
</dbReference>
<sequence length="320" mass="36705">MRALALLLALPLLGARAQHGSLWTYSEGALDQVHWPREYPTCGGTRQSPIDLQRRKVQYNPSLKALKLTGYRIQVGEFPMINNGHTVQISLPPTMRMMASDGTEYIAQQMHFHWGGASSEISGSEHTIDGIRFVAEIHIVHYNSKYKSYDIAQHEPDGLAVLAALVKVEDYGENTYYSNFISHLNNIRYPGQSTVLSGLDIEDMLPENTHHYYTYRGSLTTPPCTENVHWFVLVHHVRLSSIQTWKLENSILDHQNKTLHSDYRRIQPLNGRVVESNFVNLPSQGSEFQFYVNKLNNKLEYLRRLLEKTKVEKKPHIHQA</sequence>
<proteinExistence type="evidence at transcript level"/>
<protein>
    <recommendedName>
        <fullName>Carbonic anhydrase 6</fullName>
        <ecNumber>4.2.1.1</ecNumber>
    </recommendedName>
    <alternativeName>
        <fullName>Carbonate dehydratase VI</fullName>
    </alternativeName>
    <alternativeName>
        <fullName>Carbonic anhydrase VI</fullName>
        <shortName>CA-VI</shortName>
    </alternativeName>
</protein>
<accession>Q865C0</accession>
<feature type="signal peptide" evidence="5">
    <location>
        <begin position="1"/>
        <end position="17"/>
    </location>
</feature>
<feature type="chain" id="PRO_0000004240" description="Carbonic anhydrase 6">
    <location>
        <begin position="18"/>
        <end position="320"/>
    </location>
</feature>
<feature type="domain" description="Alpha-carbonic anhydrase" evidence="6">
    <location>
        <begin position="21"/>
        <end position="278"/>
    </location>
</feature>
<feature type="active site" description="Proton donor/acceptor" evidence="2">
    <location>
        <position position="85"/>
    </location>
</feature>
<feature type="binding site" evidence="3">
    <location>
        <position position="111"/>
    </location>
    <ligand>
        <name>Zn(2+)</name>
        <dbReference type="ChEBI" id="CHEBI:29105"/>
        <note>catalytic</note>
    </ligand>
</feature>
<feature type="binding site" evidence="3">
    <location>
        <position position="113"/>
    </location>
    <ligand>
        <name>Zn(2+)</name>
        <dbReference type="ChEBI" id="CHEBI:29105"/>
        <note>catalytic</note>
    </ligand>
</feature>
<feature type="binding site" evidence="3">
    <location>
        <position position="138"/>
    </location>
    <ligand>
        <name>Zn(2+)</name>
        <dbReference type="ChEBI" id="CHEBI:29105"/>
        <note>catalytic</note>
    </ligand>
</feature>
<feature type="binding site" evidence="2">
    <location>
        <begin position="220"/>
        <end position="221"/>
    </location>
    <ligand>
        <name>substrate</name>
    </ligand>
</feature>
<feature type="glycosylation site" description="N-linked (GlcNAc...) asparagine" evidence="5">
    <location>
        <position position="256"/>
    </location>
</feature>
<feature type="disulfide bond" evidence="5">
    <location>
        <begin position="42"/>
        <end position="224"/>
    </location>
</feature>
<evidence type="ECO:0000250" key="1"/>
<evidence type="ECO:0000250" key="2">
    <source>
        <dbReference type="UniProtKB" id="P00918"/>
    </source>
</evidence>
<evidence type="ECO:0000250" key="3">
    <source>
        <dbReference type="UniProtKB" id="P23280"/>
    </source>
</evidence>
<evidence type="ECO:0000250" key="4">
    <source>
        <dbReference type="UniProtKB" id="P23589"/>
    </source>
</evidence>
<evidence type="ECO:0000255" key="5"/>
<evidence type="ECO:0000255" key="6">
    <source>
        <dbReference type="PROSITE-ProRule" id="PRU01134"/>
    </source>
</evidence>
<evidence type="ECO:0000305" key="7"/>